<proteinExistence type="evidence at protein level"/>
<protein>
    <recommendedName>
        <fullName>Basic-leucine zipper transcription factor A</fullName>
    </recommendedName>
    <alternativeName>
        <fullName>DIF insensitive mutant A</fullName>
    </alternativeName>
</protein>
<organism>
    <name type="scientific">Dictyostelium discoideum</name>
    <name type="common">Social amoeba</name>
    <dbReference type="NCBI Taxonomy" id="44689"/>
    <lineage>
        <taxon>Eukaryota</taxon>
        <taxon>Amoebozoa</taxon>
        <taxon>Evosea</taxon>
        <taxon>Eumycetozoa</taxon>
        <taxon>Dictyostelia</taxon>
        <taxon>Dictyosteliales</taxon>
        <taxon>Dictyosteliaceae</taxon>
        <taxon>Dictyostelium</taxon>
    </lineage>
</organism>
<evidence type="ECO:0000250" key="1"/>
<evidence type="ECO:0000255" key="2"/>
<evidence type="ECO:0000255" key="3">
    <source>
        <dbReference type="PROSITE-ProRule" id="PRU00978"/>
    </source>
</evidence>
<evidence type="ECO:0000256" key="4">
    <source>
        <dbReference type="SAM" id="MobiDB-lite"/>
    </source>
</evidence>
<evidence type="ECO:0000269" key="5">
    <source>
    </source>
</evidence>
<evidence type="ECO:0000269" key="6">
    <source>
    </source>
</evidence>
<evidence type="ECO:0000305" key="7"/>
<gene>
    <name type="primary">dimA</name>
    <name type="synonym">bzpA</name>
    <name type="ORF">DDB_G0278971</name>
</gene>
<name>DIMA_DICDI</name>
<feature type="chain" id="PRO_0000328625" description="Basic-leucine zipper transcription factor A">
    <location>
        <begin position="1"/>
        <end position="1230"/>
    </location>
</feature>
<feature type="domain" description="bZIP" evidence="3">
    <location>
        <begin position="555"/>
        <end position="618"/>
    </location>
</feature>
<feature type="region of interest" description="Disordered" evidence="4">
    <location>
        <begin position="65"/>
        <end position="108"/>
    </location>
</feature>
<feature type="region of interest" description="Disordered" evidence="4">
    <location>
        <begin position="180"/>
        <end position="233"/>
    </location>
</feature>
<feature type="region of interest" description="Disordered" evidence="4">
    <location>
        <begin position="270"/>
        <end position="310"/>
    </location>
</feature>
<feature type="region of interest" description="Disordered" evidence="4">
    <location>
        <begin position="422"/>
        <end position="578"/>
    </location>
</feature>
<feature type="region of interest" description="Basic motif" evidence="3">
    <location>
        <begin position="556"/>
        <end position="586"/>
    </location>
</feature>
<feature type="region of interest" description="Leucine-zipper" evidence="3">
    <location>
        <begin position="590"/>
        <end position="604"/>
    </location>
</feature>
<feature type="region of interest" description="Disordered" evidence="4">
    <location>
        <begin position="772"/>
        <end position="869"/>
    </location>
</feature>
<feature type="region of interest" description="Disordered" evidence="4">
    <location>
        <begin position="1025"/>
        <end position="1230"/>
    </location>
</feature>
<feature type="coiled-coil region" evidence="2">
    <location>
        <begin position="728"/>
        <end position="753"/>
    </location>
</feature>
<feature type="compositionally biased region" description="Low complexity" evidence="4">
    <location>
        <begin position="69"/>
        <end position="108"/>
    </location>
</feature>
<feature type="compositionally biased region" description="Low complexity" evidence="4">
    <location>
        <begin position="192"/>
        <end position="233"/>
    </location>
</feature>
<feature type="compositionally biased region" description="Low complexity" evidence="4">
    <location>
        <begin position="270"/>
        <end position="287"/>
    </location>
</feature>
<feature type="compositionally biased region" description="Low complexity" evidence="4">
    <location>
        <begin position="295"/>
        <end position="310"/>
    </location>
</feature>
<feature type="compositionally biased region" description="Low complexity" evidence="4">
    <location>
        <begin position="422"/>
        <end position="447"/>
    </location>
</feature>
<feature type="compositionally biased region" description="Polar residues" evidence="4">
    <location>
        <begin position="448"/>
        <end position="458"/>
    </location>
</feature>
<feature type="compositionally biased region" description="Polar residues" evidence="4">
    <location>
        <begin position="466"/>
        <end position="475"/>
    </location>
</feature>
<feature type="compositionally biased region" description="Low complexity" evidence="4">
    <location>
        <begin position="476"/>
        <end position="503"/>
    </location>
</feature>
<feature type="compositionally biased region" description="Basic residues" evidence="4">
    <location>
        <begin position="523"/>
        <end position="537"/>
    </location>
</feature>
<feature type="compositionally biased region" description="Acidic residues" evidence="4">
    <location>
        <begin position="541"/>
        <end position="554"/>
    </location>
</feature>
<feature type="compositionally biased region" description="Polar residues" evidence="4">
    <location>
        <begin position="562"/>
        <end position="571"/>
    </location>
</feature>
<feature type="compositionally biased region" description="Low complexity" evidence="4">
    <location>
        <begin position="774"/>
        <end position="803"/>
    </location>
</feature>
<feature type="compositionally biased region" description="Low complexity" evidence="4">
    <location>
        <begin position="810"/>
        <end position="831"/>
    </location>
</feature>
<feature type="compositionally biased region" description="Basic residues" evidence="4">
    <location>
        <begin position="832"/>
        <end position="845"/>
    </location>
</feature>
<feature type="compositionally biased region" description="Polar residues" evidence="4">
    <location>
        <begin position="1025"/>
        <end position="1042"/>
    </location>
</feature>
<feature type="compositionally biased region" description="Low complexity" evidence="4">
    <location>
        <begin position="1052"/>
        <end position="1146"/>
    </location>
</feature>
<feature type="compositionally biased region" description="Low complexity" evidence="4">
    <location>
        <begin position="1153"/>
        <end position="1193"/>
    </location>
</feature>
<feature type="sequence conflict" description="In Ref. 1; AAR97288." evidence="7" ref="1">
    <original>A</original>
    <variation>T</variation>
    <location>
        <position position="365"/>
    </location>
</feature>
<feature type="sequence conflict" description="In Ref. 1; AAR97288." evidence="7" ref="1">
    <location>
        <position position="504"/>
    </location>
</feature>
<feature type="sequence conflict" description="In Ref. 1; AAR97288." evidence="7" ref="1">
    <original>ARLA</original>
    <variation>VS</variation>
    <location>
        <begin position="677"/>
        <end position="680"/>
    </location>
</feature>
<keyword id="KW-0175">Coiled coil</keyword>
<keyword id="KW-0221">Differentiation</keyword>
<keyword id="KW-0238">DNA-binding</keyword>
<keyword id="KW-0539">Nucleus</keyword>
<keyword id="KW-1185">Reference proteome</keyword>
<keyword id="KW-0749">Sporulation</keyword>
<keyword id="KW-0804">Transcription</keyword>
<keyword id="KW-0805">Transcription regulation</keyword>
<sequence length="1230" mass="140627">MDSDNWNFQNNPYFQDYNIGNPNNNTNGINGSSNGTMNLSNSASLFLNKNLGNSDFQPFSLQPSLYLSNSSNNTNNNNNNNNNNNNNNNNNNNNNNNNNNNNNNNIINNNTDEFVFKKISANNLQTPTSPPKDLGFIQTILQHQQELFQKKLSESGVTNLQPDQIQFMFMQEQQKYLTSLNGNDNTLPPLENNFSFQHVNNNNLTSPPQQQQQQQQQQQQQQHQQHQQHQQHQQQQQQQQQQQQQQHQHQQQQQQQQQQQQQQQQQQQQQQLKQQQPQQHPIQSPQPIQSPTPSPSLQQHQTYSYTPSTQQTSLQQLQQQQMQQLLQMSPQHQQQHNQIQQQQAAAAAAALLQQQLAQQQAQQLAQQQQLAQQQLAQQQQQQQQQHVQSLHQAQVQQAHMSQLQQQQLAQQAFQQAQQQQFHQQNIQQHQNQNQQQLQLPQPQQQQHKSTPPTQNTPPVKSPAPQTPTLTTNGKGSKSTPPTTTTTTTTTTSSSSSSSSSSSSSKKKTSNKKTGNLQVPPTPPHHHHHHHNNHHHHHSEGFSDENDEEFIDENEDKSKNKSRSSQNIASRNYRQRKKDHISEVEFKVQQLSLENERLKQENHLLKKGDLGDVMRPDFDFQQVLLESQKLMSQLQDAVNKQDHATIENLLQLYYFASQLRTTVVEREVEKIVHPYTQARLAVMGYRSNAETSILLRPFSTNLWWPKYADEVGLTEEQRKASDILWTDHLKIDMELRTERDQLDREIKELFLKKIVSHGTKRPELLFERETLSTFNSESDYPSSPSSASNSSNSPPTSSPTIITPPDSPLTNNQNNQNNNQMINSNSNNSNNNSHHHHHHHHSHLHGHSPYPVPNGTVHPPPTTAVSEHNKPIELSELLDVTRKLEMLKKNFVKHRNLICDTDLVLSTILTPFQHAKLILRLNSVTCYDFSIVDTITGIWGSINSTLKEGSFIQNLMPDQDGKFEVLEKFKQNQLLDLKGQRPIKLESLQRTYEKLYQTVLGSESPNCQFVKQADYQHQNLLTASPNYTNSPLITSSPSQLTPNSPRPPLDISNNNNNNNNNNNNNNNNNNNNNNNNNNNNNNNNNNNNNNNNNNNNNNSNNNNNTNNNNNNYNNNGNNNNGNNNNGNNNNGNNGNNGNNSNNSNNGNINSVDIQALHQQQKQNLQPQQLQQNQQLQQNQNTPPQQSQQVCSPSSPMTPELNKQPEIVGGDNTNKKNKSKKYQWYSYKTPNI</sequence>
<accession>Q54XG7</accession>
<accession>Q6T872</accession>
<dbReference type="EMBL" id="AY428796">
    <property type="protein sequence ID" value="AAR97288.1"/>
    <property type="molecule type" value="Genomic_DNA"/>
</dbReference>
<dbReference type="EMBL" id="AAFI02000026">
    <property type="protein sequence ID" value="EAL67907.2"/>
    <property type="molecule type" value="Genomic_DNA"/>
</dbReference>
<dbReference type="RefSeq" id="XP_641883.2">
    <property type="nucleotide sequence ID" value="XM_636791.2"/>
</dbReference>
<dbReference type="SMR" id="Q54XG7"/>
<dbReference type="FunCoup" id="Q54XG7">
    <property type="interactions" value="472"/>
</dbReference>
<dbReference type="STRING" id="44689.Q54XG7"/>
<dbReference type="GlyGen" id="Q54XG7">
    <property type="glycosylation" value="2 sites"/>
</dbReference>
<dbReference type="PaxDb" id="44689-DDB0216189"/>
<dbReference type="EnsemblProtists" id="EAL67907">
    <property type="protein sequence ID" value="EAL67907"/>
    <property type="gene ID" value="DDB_G0278971"/>
</dbReference>
<dbReference type="GeneID" id="8621809"/>
<dbReference type="KEGG" id="ddi:DDB_G0278971"/>
<dbReference type="dictyBase" id="DDB_G0278971">
    <property type="gene designation" value="dimA"/>
</dbReference>
<dbReference type="VEuPathDB" id="AmoebaDB:DDB_G0278971"/>
<dbReference type="eggNOG" id="ENOG502RB48">
    <property type="taxonomic scope" value="Eukaryota"/>
</dbReference>
<dbReference type="HOGENOM" id="CLU_267808_0_0_1"/>
<dbReference type="InParanoid" id="Q54XG7"/>
<dbReference type="OMA" id="TITGIWG"/>
<dbReference type="PRO" id="PR:Q54XG7"/>
<dbReference type="Proteomes" id="UP000002195">
    <property type="component" value="Chromosome 3"/>
</dbReference>
<dbReference type="GO" id="GO:0005737">
    <property type="term" value="C:cytoplasm"/>
    <property type="evidence" value="ECO:0000314"/>
    <property type="project" value="dictyBase"/>
</dbReference>
<dbReference type="GO" id="GO:0005634">
    <property type="term" value="C:nucleus"/>
    <property type="evidence" value="ECO:0000314"/>
    <property type="project" value="dictyBase"/>
</dbReference>
<dbReference type="GO" id="GO:0003700">
    <property type="term" value="F:DNA-binding transcription factor activity"/>
    <property type="evidence" value="ECO:0007669"/>
    <property type="project" value="InterPro"/>
</dbReference>
<dbReference type="GO" id="GO:0042802">
    <property type="term" value="F:identical protein binding"/>
    <property type="evidence" value="ECO:0000353"/>
    <property type="project" value="dictyBase"/>
</dbReference>
<dbReference type="GO" id="GO:0043565">
    <property type="term" value="F:sequence-specific DNA binding"/>
    <property type="evidence" value="ECO:0000314"/>
    <property type="project" value="dictyBase"/>
</dbReference>
<dbReference type="GO" id="GO:0030154">
    <property type="term" value="P:cell differentiation"/>
    <property type="evidence" value="ECO:0007669"/>
    <property type="project" value="UniProtKB-KW"/>
</dbReference>
<dbReference type="GO" id="GO:0006935">
    <property type="term" value="P:chemotaxis"/>
    <property type="evidence" value="ECO:0000315"/>
    <property type="project" value="dictyBase"/>
</dbReference>
<dbReference type="GO" id="GO:0043944">
    <property type="term" value="P:negative regulation of asexual sporulation resulting in formation of a cellular spore"/>
    <property type="evidence" value="ECO:0000315"/>
    <property type="project" value="dictyBase"/>
</dbReference>
<dbReference type="GO" id="GO:0031287">
    <property type="term" value="P:positive regulation of sorocarp stalk cell differentiation"/>
    <property type="evidence" value="ECO:0000315"/>
    <property type="project" value="dictyBase"/>
</dbReference>
<dbReference type="GO" id="GO:0012501">
    <property type="term" value="P:programmed cell death"/>
    <property type="evidence" value="ECO:0000315"/>
    <property type="project" value="dictyBase"/>
</dbReference>
<dbReference type="GO" id="GO:0045595">
    <property type="term" value="P:regulation of cell differentiation"/>
    <property type="evidence" value="ECO:0000315"/>
    <property type="project" value="dictyBase"/>
</dbReference>
<dbReference type="GO" id="GO:0010468">
    <property type="term" value="P:regulation of gene expression"/>
    <property type="evidence" value="ECO:0000318"/>
    <property type="project" value="GO_Central"/>
</dbReference>
<dbReference type="GO" id="GO:1903013">
    <property type="term" value="P:response to differentiation-inducing factor 1"/>
    <property type="evidence" value="ECO:0000315"/>
    <property type="project" value="dictyBase"/>
</dbReference>
<dbReference type="GO" id="GO:0030587">
    <property type="term" value="P:sorocarp development"/>
    <property type="evidence" value="ECO:0000315"/>
    <property type="project" value="dictyBase"/>
</dbReference>
<dbReference type="GO" id="GO:0030435">
    <property type="term" value="P:sporulation resulting in formation of a cellular spore"/>
    <property type="evidence" value="ECO:0000315"/>
    <property type="project" value="dictyBase"/>
</dbReference>
<dbReference type="CDD" id="cd14686">
    <property type="entry name" value="bZIP"/>
    <property type="match status" value="1"/>
</dbReference>
<dbReference type="InterPro" id="IPR004827">
    <property type="entry name" value="bZIP"/>
</dbReference>
<dbReference type="InterPro" id="IPR046347">
    <property type="entry name" value="bZIP_sf"/>
</dbReference>
<dbReference type="PANTHER" id="PTHR14312:SF1">
    <property type="entry name" value="BASIC-LEUCINE ZIPPER TRANSCRIPTION FACTOR A"/>
    <property type="match status" value="1"/>
</dbReference>
<dbReference type="PANTHER" id="PTHR14312">
    <property type="entry name" value="CREB/ATF BZIP TRANSCRIPTION FACTOR"/>
    <property type="match status" value="1"/>
</dbReference>
<dbReference type="SMART" id="SM00338">
    <property type="entry name" value="BRLZ"/>
    <property type="match status" value="1"/>
</dbReference>
<dbReference type="SUPFAM" id="SSF57959">
    <property type="entry name" value="Leucine zipper domain"/>
    <property type="match status" value="1"/>
</dbReference>
<dbReference type="PROSITE" id="PS50217">
    <property type="entry name" value="BZIP"/>
    <property type="match status" value="1"/>
</dbReference>
<comment type="function">
    <text evidence="5 6">Transcriptional regulator involved in DIF-1 signaling. DIF-1 (Differentiation Inducing Factor-1) is a signal molecule involved in the differentiation of pstO (prestalk-O) cells. Functions both as an activator of prestalk gene expression and a repressor of prespore gene expression.</text>
</comment>
<comment type="subunit">
    <text evidence="1">Binds DNA as a dimer (By similarity). Heterodimerizes with dimB; in vitro. Also able to form homodimer; in vitro.</text>
</comment>
<comment type="subcellular location">
    <subcellularLocation>
        <location evidence="3 6">Nucleus</location>
    </subcellularLocation>
    <text>In response to DIF-1, it accumulates rapidly in the nucleus. Nuclear accumulation is dependent on dimB.</text>
</comment>
<comment type="developmental stage">
    <text evidence="5 6">Maximum levels of expression in prespore cells, but also expressed in prestalk cells at the slug stage. Developmentally regulated with levels peaking at culmination.</text>
</comment>
<comment type="disruption phenotype">
    <text evidence="5 6">Defective in DIF biosynthesis and in DIF-1-induced stalk-cell differentiation. Exhibits morphological and cell type differentiation defects. DimA and dimB double mutant has the same phenotype.</text>
</comment>
<comment type="similarity">
    <text evidence="7">Belongs to the bZIP family.</text>
</comment>
<reference key="1">
    <citation type="journal article" date="2004" name="Development">
        <title>A bZIP/bRLZ transcription factor required for DIF signaling in Dictyostelium.</title>
        <authorList>
            <person name="Thompson C.R.L."/>
            <person name="Fu Q."/>
            <person name="Buhay C."/>
            <person name="Kay R.R."/>
            <person name="Shaulsky G."/>
        </authorList>
    </citation>
    <scope>NUCLEOTIDE SEQUENCE [GENOMIC DNA]</scope>
    <scope>FUNCTION</scope>
    <scope>DEVELOPMENTAL STAGE</scope>
    <scope>DISRUPTION PHENOTYPE</scope>
    <source>
        <strain>AX4</strain>
    </source>
</reference>
<reference key="2">
    <citation type="journal article" date="2005" name="Nature">
        <title>The genome of the social amoeba Dictyostelium discoideum.</title>
        <authorList>
            <person name="Eichinger L."/>
            <person name="Pachebat J.A."/>
            <person name="Gloeckner G."/>
            <person name="Rajandream M.A."/>
            <person name="Sucgang R."/>
            <person name="Berriman M."/>
            <person name="Song J."/>
            <person name="Olsen R."/>
            <person name="Szafranski K."/>
            <person name="Xu Q."/>
            <person name="Tunggal B."/>
            <person name="Kummerfeld S."/>
            <person name="Madera M."/>
            <person name="Konfortov B.A."/>
            <person name="Rivero F."/>
            <person name="Bankier A.T."/>
            <person name="Lehmann R."/>
            <person name="Hamlin N."/>
            <person name="Davies R."/>
            <person name="Gaudet P."/>
            <person name="Fey P."/>
            <person name="Pilcher K."/>
            <person name="Chen G."/>
            <person name="Saunders D."/>
            <person name="Sodergren E.J."/>
            <person name="Davis P."/>
            <person name="Kerhornou A."/>
            <person name="Nie X."/>
            <person name="Hall N."/>
            <person name="Anjard C."/>
            <person name="Hemphill L."/>
            <person name="Bason N."/>
            <person name="Farbrother P."/>
            <person name="Desany B."/>
            <person name="Just E."/>
            <person name="Morio T."/>
            <person name="Rost R."/>
            <person name="Churcher C.M."/>
            <person name="Cooper J."/>
            <person name="Haydock S."/>
            <person name="van Driessche N."/>
            <person name="Cronin A."/>
            <person name="Goodhead I."/>
            <person name="Muzny D.M."/>
            <person name="Mourier T."/>
            <person name="Pain A."/>
            <person name="Lu M."/>
            <person name="Harper D."/>
            <person name="Lindsay R."/>
            <person name="Hauser H."/>
            <person name="James K.D."/>
            <person name="Quiles M."/>
            <person name="Madan Babu M."/>
            <person name="Saito T."/>
            <person name="Buchrieser C."/>
            <person name="Wardroper A."/>
            <person name="Felder M."/>
            <person name="Thangavelu M."/>
            <person name="Johnson D."/>
            <person name="Knights A."/>
            <person name="Loulseged H."/>
            <person name="Mungall K.L."/>
            <person name="Oliver K."/>
            <person name="Price C."/>
            <person name="Quail M.A."/>
            <person name="Urushihara H."/>
            <person name="Hernandez J."/>
            <person name="Rabbinowitsch E."/>
            <person name="Steffen D."/>
            <person name="Sanders M."/>
            <person name="Ma J."/>
            <person name="Kohara Y."/>
            <person name="Sharp S."/>
            <person name="Simmonds M.N."/>
            <person name="Spiegler S."/>
            <person name="Tivey A."/>
            <person name="Sugano S."/>
            <person name="White B."/>
            <person name="Walker D."/>
            <person name="Woodward J.R."/>
            <person name="Winckler T."/>
            <person name="Tanaka Y."/>
            <person name="Shaulsky G."/>
            <person name="Schleicher M."/>
            <person name="Weinstock G.M."/>
            <person name="Rosenthal A."/>
            <person name="Cox E.C."/>
            <person name="Chisholm R.L."/>
            <person name="Gibbs R.A."/>
            <person name="Loomis W.F."/>
            <person name="Platzer M."/>
            <person name="Kay R.R."/>
            <person name="Williams J.G."/>
            <person name="Dear P.H."/>
            <person name="Noegel A.A."/>
            <person name="Barrell B.G."/>
            <person name="Kuspa A."/>
        </authorList>
    </citation>
    <scope>NUCLEOTIDE SEQUENCE [LARGE SCALE GENOMIC DNA]</scope>
    <source>
        <strain>AX4</strain>
    </source>
</reference>
<reference key="3">
    <citation type="journal article" date="2006" name="Development">
        <title>bZIP transcription factor interactions regulate DIF responses in Dictyostelium.</title>
        <authorList>
            <person name="Huang E."/>
            <person name="Blagg S.L."/>
            <person name="Keller T."/>
            <person name="Katoh M."/>
            <person name="Shaulsky G."/>
            <person name="Thompson C.R.L."/>
        </authorList>
    </citation>
    <scope>DISRUPTION PHENOTYPE</scope>
    <scope>FUNCTION</scope>
    <scope>INTERACTION WITH DIMB</scope>
    <scope>DEVELOPMENTAL STAGE</scope>
    <scope>SUBCELLULAR LOCATION</scope>
</reference>